<evidence type="ECO:0000250" key="1"/>
<evidence type="ECO:0000255" key="2">
    <source>
        <dbReference type="PROSITE-ProRule" id="PRU00243"/>
    </source>
</evidence>
<evidence type="ECO:0000256" key="3">
    <source>
        <dbReference type="SAM" id="MobiDB-lite"/>
    </source>
</evidence>
<evidence type="ECO:0000305" key="4"/>
<proteinExistence type="evidence at transcript level"/>
<name>CAP6_ARATH</name>
<gene>
    <name type="ordered locus">At4g25940</name>
    <name type="ORF">F20B18.50</name>
</gene>
<accession>Q8VYT2</accession>
<accession>Q9SZG9</accession>
<protein>
    <recommendedName>
        <fullName>Putative clathrin assembly protein At4g25940</fullName>
    </recommendedName>
</protein>
<reference key="1">
    <citation type="journal article" date="1999" name="Nature">
        <title>Sequence and analysis of chromosome 4 of the plant Arabidopsis thaliana.</title>
        <authorList>
            <person name="Mayer K.F.X."/>
            <person name="Schueller C."/>
            <person name="Wambutt R."/>
            <person name="Murphy G."/>
            <person name="Volckaert G."/>
            <person name="Pohl T."/>
            <person name="Duesterhoeft A."/>
            <person name="Stiekema W."/>
            <person name="Entian K.-D."/>
            <person name="Terryn N."/>
            <person name="Harris B."/>
            <person name="Ansorge W."/>
            <person name="Brandt P."/>
            <person name="Grivell L.A."/>
            <person name="Rieger M."/>
            <person name="Weichselgartner M."/>
            <person name="de Simone V."/>
            <person name="Obermaier B."/>
            <person name="Mache R."/>
            <person name="Mueller M."/>
            <person name="Kreis M."/>
            <person name="Delseny M."/>
            <person name="Puigdomenech P."/>
            <person name="Watson M."/>
            <person name="Schmidtheini T."/>
            <person name="Reichert B."/>
            <person name="Portetelle D."/>
            <person name="Perez-Alonso M."/>
            <person name="Boutry M."/>
            <person name="Bancroft I."/>
            <person name="Vos P."/>
            <person name="Hoheisel J."/>
            <person name="Zimmermann W."/>
            <person name="Wedler H."/>
            <person name="Ridley P."/>
            <person name="Langham S.-A."/>
            <person name="McCullagh B."/>
            <person name="Bilham L."/>
            <person name="Robben J."/>
            <person name="van der Schueren J."/>
            <person name="Grymonprez B."/>
            <person name="Chuang Y.-J."/>
            <person name="Vandenbussche F."/>
            <person name="Braeken M."/>
            <person name="Weltjens I."/>
            <person name="Voet M."/>
            <person name="Bastiaens I."/>
            <person name="Aert R."/>
            <person name="Defoor E."/>
            <person name="Weitzenegger T."/>
            <person name="Bothe G."/>
            <person name="Ramsperger U."/>
            <person name="Hilbert H."/>
            <person name="Braun M."/>
            <person name="Holzer E."/>
            <person name="Brandt A."/>
            <person name="Peters S."/>
            <person name="van Staveren M."/>
            <person name="Dirkse W."/>
            <person name="Mooijman P."/>
            <person name="Klein Lankhorst R."/>
            <person name="Rose M."/>
            <person name="Hauf J."/>
            <person name="Koetter P."/>
            <person name="Berneiser S."/>
            <person name="Hempel S."/>
            <person name="Feldpausch M."/>
            <person name="Lamberth S."/>
            <person name="Van den Daele H."/>
            <person name="De Keyser A."/>
            <person name="Buysshaert C."/>
            <person name="Gielen J."/>
            <person name="Villarroel R."/>
            <person name="De Clercq R."/>
            <person name="van Montagu M."/>
            <person name="Rogers J."/>
            <person name="Cronin A."/>
            <person name="Quail M.A."/>
            <person name="Bray-Allen S."/>
            <person name="Clark L."/>
            <person name="Doggett J."/>
            <person name="Hall S."/>
            <person name="Kay M."/>
            <person name="Lennard N."/>
            <person name="McLay K."/>
            <person name="Mayes R."/>
            <person name="Pettett A."/>
            <person name="Rajandream M.A."/>
            <person name="Lyne M."/>
            <person name="Benes V."/>
            <person name="Rechmann S."/>
            <person name="Borkova D."/>
            <person name="Bloecker H."/>
            <person name="Scharfe M."/>
            <person name="Grimm M."/>
            <person name="Loehnert T.-H."/>
            <person name="Dose S."/>
            <person name="de Haan M."/>
            <person name="Maarse A.C."/>
            <person name="Schaefer M."/>
            <person name="Mueller-Auer S."/>
            <person name="Gabel C."/>
            <person name="Fuchs M."/>
            <person name="Fartmann B."/>
            <person name="Granderath K."/>
            <person name="Dauner D."/>
            <person name="Herzl A."/>
            <person name="Neumann S."/>
            <person name="Argiriou A."/>
            <person name="Vitale D."/>
            <person name="Liguori R."/>
            <person name="Piravandi E."/>
            <person name="Massenet O."/>
            <person name="Quigley F."/>
            <person name="Clabauld G."/>
            <person name="Muendlein A."/>
            <person name="Felber R."/>
            <person name="Schnabl S."/>
            <person name="Hiller R."/>
            <person name="Schmidt W."/>
            <person name="Lecharny A."/>
            <person name="Aubourg S."/>
            <person name="Chefdor F."/>
            <person name="Cooke R."/>
            <person name="Berger C."/>
            <person name="Monfort A."/>
            <person name="Casacuberta E."/>
            <person name="Gibbons T."/>
            <person name="Weber N."/>
            <person name="Vandenbol M."/>
            <person name="Bargues M."/>
            <person name="Terol J."/>
            <person name="Torres A."/>
            <person name="Perez-Perez A."/>
            <person name="Purnelle B."/>
            <person name="Bent E."/>
            <person name="Johnson S."/>
            <person name="Tacon D."/>
            <person name="Jesse T."/>
            <person name="Heijnen L."/>
            <person name="Schwarz S."/>
            <person name="Scholler P."/>
            <person name="Heber S."/>
            <person name="Francs P."/>
            <person name="Bielke C."/>
            <person name="Frishman D."/>
            <person name="Haase D."/>
            <person name="Lemcke K."/>
            <person name="Mewes H.-W."/>
            <person name="Stocker S."/>
            <person name="Zaccaria P."/>
            <person name="Bevan M."/>
            <person name="Wilson R.K."/>
            <person name="de la Bastide M."/>
            <person name="Habermann K."/>
            <person name="Parnell L."/>
            <person name="Dedhia N."/>
            <person name="Gnoj L."/>
            <person name="Schutz K."/>
            <person name="Huang E."/>
            <person name="Spiegel L."/>
            <person name="Sekhon M."/>
            <person name="Murray J."/>
            <person name="Sheet P."/>
            <person name="Cordes M."/>
            <person name="Abu-Threideh J."/>
            <person name="Stoneking T."/>
            <person name="Kalicki J."/>
            <person name="Graves T."/>
            <person name="Harmon G."/>
            <person name="Edwards J."/>
            <person name="Latreille P."/>
            <person name="Courtney L."/>
            <person name="Cloud J."/>
            <person name="Abbott A."/>
            <person name="Scott K."/>
            <person name="Johnson D."/>
            <person name="Minx P."/>
            <person name="Bentley D."/>
            <person name="Fulton B."/>
            <person name="Miller N."/>
            <person name="Greco T."/>
            <person name="Kemp K."/>
            <person name="Kramer J."/>
            <person name="Fulton L."/>
            <person name="Mardis E."/>
            <person name="Dante M."/>
            <person name="Pepin K."/>
            <person name="Hillier L.W."/>
            <person name="Nelson J."/>
            <person name="Spieth J."/>
            <person name="Ryan E."/>
            <person name="Andrews S."/>
            <person name="Geisel C."/>
            <person name="Layman D."/>
            <person name="Du H."/>
            <person name="Ali J."/>
            <person name="Berghoff A."/>
            <person name="Jones K."/>
            <person name="Drone K."/>
            <person name="Cotton M."/>
            <person name="Joshu C."/>
            <person name="Antonoiu B."/>
            <person name="Zidanic M."/>
            <person name="Strong C."/>
            <person name="Sun H."/>
            <person name="Lamar B."/>
            <person name="Yordan C."/>
            <person name="Ma P."/>
            <person name="Zhong J."/>
            <person name="Preston R."/>
            <person name="Vil D."/>
            <person name="Shekher M."/>
            <person name="Matero A."/>
            <person name="Shah R."/>
            <person name="Swaby I.K."/>
            <person name="O'Shaughnessy A."/>
            <person name="Rodriguez M."/>
            <person name="Hoffman J."/>
            <person name="Till S."/>
            <person name="Granat S."/>
            <person name="Shohdy N."/>
            <person name="Hasegawa A."/>
            <person name="Hameed A."/>
            <person name="Lodhi M."/>
            <person name="Johnson A."/>
            <person name="Chen E."/>
            <person name="Marra M.A."/>
            <person name="Martienssen R."/>
            <person name="McCombie W.R."/>
        </authorList>
    </citation>
    <scope>NUCLEOTIDE SEQUENCE [LARGE SCALE GENOMIC DNA]</scope>
    <source>
        <strain>cv. Columbia</strain>
    </source>
</reference>
<reference key="2">
    <citation type="journal article" date="2017" name="Plant J.">
        <title>Araport11: a complete reannotation of the Arabidopsis thaliana reference genome.</title>
        <authorList>
            <person name="Cheng C.Y."/>
            <person name="Krishnakumar V."/>
            <person name="Chan A.P."/>
            <person name="Thibaud-Nissen F."/>
            <person name="Schobel S."/>
            <person name="Town C.D."/>
        </authorList>
    </citation>
    <scope>GENOME REANNOTATION</scope>
    <source>
        <strain>cv. Columbia</strain>
    </source>
</reference>
<reference key="3">
    <citation type="journal article" date="2003" name="Science">
        <title>Empirical analysis of transcriptional activity in the Arabidopsis genome.</title>
        <authorList>
            <person name="Yamada K."/>
            <person name="Lim J."/>
            <person name="Dale J.M."/>
            <person name="Chen H."/>
            <person name="Shinn P."/>
            <person name="Palm C.J."/>
            <person name="Southwick A.M."/>
            <person name="Wu H.C."/>
            <person name="Kim C.J."/>
            <person name="Nguyen M."/>
            <person name="Pham P.K."/>
            <person name="Cheuk R.F."/>
            <person name="Karlin-Newmann G."/>
            <person name="Liu S.X."/>
            <person name="Lam B."/>
            <person name="Sakano H."/>
            <person name="Wu T."/>
            <person name="Yu G."/>
            <person name="Miranda M."/>
            <person name="Quach H.L."/>
            <person name="Tripp M."/>
            <person name="Chang C.H."/>
            <person name="Lee J.M."/>
            <person name="Toriumi M.J."/>
            <person name="Chan M.M."/>
            <person name="Tang C.C."/>
            <person name="Onodera C.S."/>
            <person name="Deng J.M."/>
            <person name="Akiyama K."/>
            <person name="Ansari Y."/>
            <person name="Arakawa T."/>
            <person name="Banh J."/>
            <person name="Banno F."/>
            <person name="Bowser L."/>
            <person name="Brooks S.Y."/>
            <person name="Carninci P."/>
            <person name="Chao Q."/>
            <person name="Choy N."/>
            <person name="Enju A."/>
            <person name="Goldsmith A.D."/>
            <person name="Gurjal M."/>
            <person name="Hansen N.F."/>
            <person name="Hayashizaki Y."/>
            <person name="Johnson-Hopson C."/>
            <person name="Hsuan V.W."/>
            <person name="Iida K."/>
            <person name="Karnes M."/>
            <person name="Khan S."/>
            <person name="Koesema E."/>
            <person name="Ishida J."/>
            <person name="Jiang P.X."/>
            <person name="Jones T."/>
            <person name="Kawai J."/>
            <person name="Kamiya A."/>
            <person name="Meyers C."/>
            <person name="Nakajima M."/>
            <person name="Narusaka M."/>
            <person name="Seki M."/>
            <person name="Sakurai T."/>
            <person name="Satou M."/>
            <person name="Tamse R."/>
            <person name="Vaysberg M."/>
            <person name="Wallender E.K."/>
            <person name="Wong C."/>
            <person name="Yamamura Y."/>
            <person name="Yuan S."/>
            <person name="Shinozaki K."/>
            <person name="Davis R.W."/>
            <person name="Theologis A."/>
            <person name="Ecker J.R."/>
        </authorList>
    </citation>
    <scope>NUCLEOTIDE SEQUENCE [LARGE SCALE MRNA]</scope>
    <source>
        <strain>cv. Columbia</strain>
    </source>
</reference>
<sequence>MATFNSFRKAVGAIKDSTTVSIAKVNSEFKDLDVAIVKATNHVESAPKERHIRRIFSATSVVQPRADVAYCIHALAKRLSKTRNWVVAIKVLIVIHRTLREGDPTFREELLNYSHRGHILRISNFKDDTSPLAWDCSAWIRTYALFLEERLECYRVLKYDIEAERLPKGSGASSKNVDFNASQTYRTRMLSDEELLEQLPALQQLLYRLIGCQPEGSAYSNYLIQYALALVLKESFKIYCAINDGIINLVDMFFEMSRHDAVKALNIYKRAGQQAENLADFYEYCKGLELARNFQFPTLRQPPPSFLATMEDYIKEAPQSGSVQKKLEYQEKEEEEQEEEEAEHSVQPEEPAEADNQKENSEGDQPLIEEEEEDQEKIEEEDAKPSFLIDTDDLLGLNEINPKAAEIEDRNALALAIYPPGHEAPGPSNILSLIETGGSGWELALVTPQNNNNNNNPRPAPNTKLAGGFDNLLLDSLYEDDSARRQIQLTNAGYGHGGIDTTAAPPNPFQMQQDPFAMSNNIAPPTNVQMAMQQQQQQQMTMMHQSPYNYTHPHDYHQNHHHHQFSAGPSPSNPFGDAFLALPPPPGSAGPQQNNHHHMLL</sequence>
<keyword id="KW-0168">Coated pit</keyword>
<keyword id="KW-0968">Cytoplasmic vesicle</keyword>
<keyword id="KW-0254">Endocytosis</keyword>
<keyword id="KW-0333">Golgi apparatus</keyword>
<keyword id="KW-0472">Membrane</keyword>
<keyword id="KW-1185">Reference proteome</keyword>
<feature type="chain" id="PRO_0000187072" description="Putative clathrin assembly protein At4g25940">
    <location>
        <begin position="1"/>
        <end position="601"/>
    </location>
</feature>
<feature type="domain" description="ENTH" evidence="2">
    <location>
        <begin position="24"/>
        <end position="161"/>
    </location>
</feature>
<feature type="region of interest" description="Disordered" evidence="3">
    <location>
        <begin position="319"/>
        <end position="390"/>
    </location>
</feature>
<feature type="region of interest" description="Disordered" evidence="3">
    <location>
        <begin position="548"/>
        <end position="601"/>
    </location>
</feature>
<feature type="compositionally biased region" description="Acidic residues" evidence="3">
    <location>
        <begin position="331"/>
        <end position="342"/>
    </location>
</feature>
<feature type="compositionally biased region" description="Acidic residues" evidence="3">
    <location>
        <begin position="367"/>
        <end position="382"/>
    </location>
</feature>
<organism>
    <name type="scientific">Arabidopsis thaliana</name>
    <name type="common">Mouse-ear cress</name>
    <dbReference type="NCBI Taxonomy" id="3702"/>
    <lineage>
        <taxon>Eukaryota</taxon>
        <taxon>Viridiplantae</taxon>
        <taxon>Streptophyta</taxon>
        <taxon>Embryophyta</taxon>
        <taxon>Tracheophyta</taxon>
        <taxon>Spermatophyta</taxon>
        <taxon>Magnoliopsida</taxon>
        <taxon>eudicotyledons</taxon>
        <taxon>Gunneridae</taxon>
        <taxon>Pentapetalae</taxon>
        <taxon>rosids</taxon>
        <taxon>malvids</taxon>
        <taxon>Brassicales</taxon>
        <taxon>Brassicaceae</taxon>
        <taxon>Camelineae</taxon>
        <taxon>Arabidopsis</taxon>
    </lineage>
</organism>
<dbReference type="EMBL" id="AL049483">
    <property type="protein sequence ID" value="CAB39659.1"/>
    <property type="status" value="ALT_SEQ"/>
    <property type="molecule type" value="Genomic_DNA"/>
</dbReference>
<dbReference type="EMBL" id="AL161564">
    <property type="protein sequence ID" value="CAB79449.1"/>
    <property type="status" value="ALT_SEQ"/>
    <property type="molecule type" value="Genomic_DNA"/>
</dbReference>
<dbReference type="EMBL" id="CP002687">
    <property type="protein sequence ID" value="AEE85135.1"/>
    <property type="molecule type" value="Genomic_DNA"/>
</dbReference>
<dbReference type="EMBL" id="AY070045">
    <property type="protein sequence ID" value="AAL49802.1"/>
    <property type="molecule type" value="mRNA"/>
</dbReference>
<dbReference type="EMBL" id="AY096427">
    <property type="protein sequence ID" value="AAM20067.1"/>
    <property type="molecule type" value="mRNA"/>
</dbReference>
<dbReference type="PIR" id="T04249">
    <property type="entry name" value="T04249"/>
</dbReference>
<dbReference type="RefSeq" id="NP_194324.2">
    <property type="nucleotide sequence ID" value="NM_118727.5"/>
</dbReference>
<dbReference type="SMR" id="Q8VYT2"/>
<dbReference type="FunCoup" id="Q8VYT2">
    <property type="interactions" value="906"/>
</dbReference>
<dbReference type="STRING" id="3702.Q8VYT2"/>
<dbReference type="iPTMnet" id="Q8VYT2"/>
<dbReference type="PaxDb" id="3702-AT4G25940.1"/>
<dbReference type="ProteomicsDB" id="222797"/>
<dbReference type="EnsemblPlants" id="AT4G25940.1">
    <property type="protein sequence ID" value="AT4G25940.1"/>
    <property type="gene ID" value="AT4G25940"/>
</dbReference>
<dbReference type="GeneID" id="828700"/>
<dbReference type="Gramene" id="AT4G25940.1">
    <property type="protein sequence ID" value="AT4G25940.1"/>
    <property type="gene ID" value="AT4G25940"/>
</dbReference>
<dbReference type="KEGG" id="ath:AT4G25940"/>
<dbReference type="Araport" id="AT4G25940"/>
<dbReference type="TAIR" id="AT4G25940">
    <property type="gene designation" value="PICALM2B"/>
</dbReference>
<dbReference type="eggNOG" id="KOG0251">
    <property type="taxonomic scope" value="Eukaryota"/>
</dbReference>
<dbReference type="HOGENOM" id="CLU_014098_2_1_1"/>
<dbReference type="InParanoid" id="Q8VYT2"/>
<dbReference type="OMA" id="METECST"/>
<dbReference type="PhylomeDB" id="Q8VYT2"/>
<dbReference type="PRO" id="PR:Q8VYT2"/>
<dbReference type="Proteomes" id="UP000006548">
    <property type="component" value="Chromosome 4"/>
</dbReference>
<dbReference type="ExpressionAtlas" id="Q8VYT2">
    <property type="expression patterns" value="baseline and differential"/>
</dbReference>
<dbReference type="GO" id="GO:0005905">
    <property type="term" value="C:clathrin-coated pit"/>
    <property type="evidence" value="ECO:0007669"/>
    <property type="project" value="UniProtKB-SubCell"/>
</dbReference>
<dbReference type="GO" id="GO:0030136">
    <property type="term" value="C:clathrin-coated vesicle"/>
    <property type="evidence" value="ECO:0007669"/>
    <property type="project" value="UniProtKB-SubCell"/>
</dbReference>
<dbReference type="GO" id="GO:0005829">
    <property type="term" value="C:cytosol"/>
    <property type="evidence" value="ECO:0007005"/>
    <property type="project" value="TAIR"/>
</dbReference>
<dbReference type="GO" id="GO:0005794">
    <property type="term" value="C:Golgi apparatus"/>
    <property type="evidence" value="ECO:0007669"/>
    <property type="project" value="UniProtKB-SubCell"/>
</dbReference>
<dbReference type="GO" id="GO:0005545">
    <property type="term" value="F:1-phosphatidylinositol binding"/>
    <property type="evidence" value="ECO:0007669"/>
    <property type="project" value="InterPro"/>
</dbReference>
<dbReference type="GO" id="GO:0030276">
    <property type="term" value="F:clathrin binding"/>
    <property type="evidence" value="ECO:0007669"/>
    <property type="project" value="InterPro"/>
</dbReference>
<dbReference type="GO" id="GO:0048268">
    <property type="term" value="P:clathrin coat assembly"/>
    <property type="evidence" value="ECO:0007669"/>
    <property type="project" value="InterPro"/>
</dbReference>
<dbReference type="GO" id="GO:0072583">
    <property type="term" value="P:clathrin-dependent endocytosis"/>
    <property type="evidence" value="ECO:0007669"/>
    <property type="project" value="InterPro"/>
</dbReference>
<dbReference type="CDD" id="cd03564">
    <property type="entry name" value="ANTH_N"/>
    <property type="match status" value="1"/>
</dbReference>
<dbReference type="FunFam" id="1.25.40.90:FF:000005">
    <property type="entry name" value="Clathrin assembly protein AP180"/>
    <property type="match status" value="1"/>
</dbReference>
<dbReference type="FunFam" id="1.20.58.150:FF:000003">
    <property type="entry name" value="Putative clathrin assembly protein"/>
    <property type="match status" value="1"/>
</dbReference>
<dbReference type="Gene3D" id="1.25.40.90">
    <property type="match status" value="1"/>
</dbReference>
<dbReference type="Gene3D" id="1.20.58.150">
    <property type="entry name" value="ANTH domain"/>
    <property type="match status" value="1"/>
</dbReference>
<dbReference type="InterPro" id="IPR011417">
    <property type="entry name" value="ANTH_dom"/>
</dbReference>
<dbReference type="InterPro" id="IPR014712">
    <property type="entry name" value="ANTH_dom_sf"/>
</dbReference>
<dbReference type="InterPro" id="IPR048050">
    <property type="entry name" value="ANTH_N_plant"/>
</dbReference>
<dbReference type="InterPro" id="IPR045192">
    <property type="entry name" value="AP180-like"/>
</dbReference>
<dbReference type="InterPro" id="IPR013809">
    <property type="entry name" value="ENTH"/>
</dbReference>
<dbReference type="InterPro" id="IPR008942">
    <property type="entry name" value="ENTH_VHS"/>
</dbReference>
<dbReference type="PANTHER" id="PTHR22951">
    <property type="entry name" value="CLATHRIN ASSEMBLY PROTEIN"/>
    <property type="match status" value="1"/>
</dbReference>
<dbReference type="PANTHER" id="PTHR22951:SF67">
    <property type="entry name" value="ENTH DOMAIN-CONTAINING PROTEIN"/>
    <property type="match status" value="1"/>
</dbReference>
<dbReference type="Pfam" id="PF07651">
    <property type="entry name" value="ANTH"/>
    <property type="match status" value="1"/>
</dbReference>
<dbReference type="SMART" id="SM00273">
    <property type="entry name" value="ENTH"/>
    <property type="match status" value="1"/>
</dbReference>
<dbReference type="SUPFAM" id="SSF48464">
    <property type="entry name" value="ENTH/VHS domain"/>
    <property type="match status" value="1"/>
</dbReference>
<dbReference type="SUPFAM" id="SSF89009">
    <property type="entry name" value="GAT-like domain"/>
    <property type="match status" value="1"/>
</dbReference>
<dbReference type="PROSITE" id="PS50942">
    <property type="entry name" value="ENTH"/>
    <property type="match status" value="1"/>
</dbReference>
<comment type="subcellular location">
    <subcellularLocation>
        <location evidence="1">Membrane</location>
        <location evidence="1">Clathrin-coated pit</location>
    </subcellularLocation>
    <subcellularLocation>
        <location evidence="1">Golgi apparatus</location>
    </subcellularLocation>
    <subcellularLocation>
        <location evidence="1">Cytoplasmic vesicle</location>
        <location evidence="1">Clathrin-coated vesicle</location>
    </subcellularLocation>
    <text evidence="1">Colocalized with clathrin in the Golgi area.</text>
</comment>
<comment type="sequence caution" evidence="4">
    <conflict type="erroneous gene model prediction">
        <sequence resource="EMBL-CDS" id="CAB39659"/>
    </conflict>
</comment>
<comment type="sequence caution" evidence="4">
    <conflict type="erroneous gene model prediction">
        <sequence resource="EMBL-CDS" id="CAB79449"/>
    </conflict>
</comment>